<protein>
    <recommendedName>
        <fullName evidence="1">Recombination protein RecR</fullName>
    </recommendedName>
</protein>
<organism>
    <name type="scientific">Ureaplasma urealyticum serovar 10 (strain ATCC 33699 / Western)</name>
    <dbReference type="NCBI Taxonomy" id="565575"/>
    <lineage>
        <taxon>Bacteria</taxon>
        <taxon>Bacillati</taxon>
        <taxon>Mycoplasmatota</taxon>
        <taxon>Mycoplasmoidales</taxon>
        <taxon>Mycoplasmoidaceae</taxon>
        <taxon>Ureaplasma</taxon>
    </lineage>
</organism>
<comment type="function">
    <text evidence="1">May play a role in DNA repair. It seems to be involved in an RecBC-independent recombinational process of DNA repair. It may act with RecF and RecO.</text>
</comment>
<comment type="similarity">
    <text evidence="1">Belongs to the RecR family.</text>
</comment>
<dbReference type="EMBL" id="CP001184">
    <property type="protein sequence ID" value="ACI60023.1"/>
    <property type="molecule type" value="Genomic_DNA"/>
</dbReference>
<dbReference type="RefSeq" id="WP_004025559.1">
    <property type="nucleotide sequence ID" value="NC_011374.1"/>
</dbReference>
<dbReference type="SMR" id="B5ZAS4"/>
<dbReference type="STRING" id="565575.UUR10_0101"/>
<dbReference type="GeneID" id="93848586"/>
<dbReference type="KEGG" id="uue:UUR10_0101"/>
<dbReference type="eggNOG" id="COG0353">
    <property type="taxonomic scope" value="Bacteria"/>
</dbReference>
<dbReference type="HOGENOM" id="CLU_060739_1_1_14"/>
<dbReference type="OrthoDB" id="9802672at2"/>
<dbReference type="Proteomes" id="UP000002018">
    <property type="component" value="Chromosome"/>
</dbReference>
<dbReference type="GO" id="GO:0003677">
    <property type="term" value="F:DNA binding"/>
    <property type="evidence" value="ECO:0007669"/>
    <property type="project" value="UniProtKB-UniRule"/>
</dbReference>
<dbReference type="GO" id="GO:0008270">
    <property type="term" value="F:zinc ion binding"/>
    <property type="evidence" value="ECO:0007669"/>
    <property type="project" value="UniProtKB-KW"/>
</dbReference>
<dbReference type="GO" id="GO:0006310">
    <property type="term" value="P:DNA recombination"/>
    <property type="evidence" value="ECO:0007669"/>
    <property type="project" value="UniProtKB-UniRule"/>
</dbReference>
<dbReference type="GO" id="GO:0006281">
    <property type="term" value="P:DNA repair"/>
    <property type="evidence" value="ECO:0007669"/>
    <property type="project" value="UniProtKB-UniRule"/>
</dbReference>
<dbReference type="CDD" id="cd01025">
    <property type="entry name" value="TOPRIM_recR"/>
    <property type="match status" value="1"/>
</dbReference>
<dbReference type="Gene3D" id="3.40.1360.10">
    <property type="match status" value="1"/>
</dbReference>
<dbReference type="Gene3D" id="1.10.8.420">
    <property type="entry name" value="RecR Domain 1"/>
    <property type="match status" value="1"/>
</dbReference>
<dbReference type="HAMAP" id="MF_00017">
    <property type="entry name" value="RecR"/>
    <property type="match status" value="1"/>
</dbReference>
<dbReference type="InterPro" id="IPR000093">
    <property type="entry name" value="DNA_Rcmb_RecR"/>
</dbReference>
<dbReference type="InterPro" id="IPR023627">
    <property type="entry name" value="Rcmb_RecR"/>
</dbReference>
<dbReference type="InterPro" id="IPR006171">
    <property type="entry name" value="TOPRIM_dom"/>
</dbReference>
<dbReference type="InterPro" id="IPR034137">
    <property type="entry name" value="TOPRIM_RecR"/>
</dbReference>
<dbReference type="NCBIfam" id="TIGR00615">
    <property type="entry name" value="recR"/>
    <property type="match status" value="1"/>
</dbReference>
<dbReference type="PANTHER" id="PTHR30446">
    <property type="entry name" value="RECOMBINATION PROTEIN RECR"/>
    <property type="match status" value="1"/>
</dbReference>
<dbReference type="PANTHER" id="PTHR30446:SF0">
    <property type="entry name" value="RECOMBINATION PROTEIN RECR"/>
    <property type="match status" value="1"/>
</dbReference>
<dbReference type="Pfam" id="PF21175">
    <property type="entry name" value="RecR_C"/>
    <property type="match status" value="1"/>
</dbReference>
<dbReference type="Pfam" id="PF21176">
    <property type="entry name" value="RecR_HhH"/>
    <property type="match status" value="1"/>
</dbReference>
<dbReference type="Pfam" id="PF13662">
    <property type="entry name" value="Toprim_4"/>
    <property type="match status" value="1"/>
</dbReference>
<dbReference type="SUPFAM" id="SSF111304">
    <property type="entry name" value="Recombination protein RecR"/>
    <property type="match status" value="1"/>
</dbReference>
<dbReference type="PROSITE" id="PS50880">
    <property type="entry name" value="TOPRIM"/>
    <property type="match status" value="1"/>
</dbReference>
<proteinExistence type="inferred from homology"/>
<sequence>MSKPVEFEMLVDALKSLPGVGTKNAKKWAFFLLQQDQKYIDDFIKRIKDAKTNIIKCKYCSNFGNKDECDICSNDYRDFTKLMIVTTNEDLERIESANIYNGLYHITNGEVSLRKNVVIEHTNIKIIKERVLNGSFKEIIIATSYTHDGEVTADYIVKMLEDIKDIQIYRIGFGIPLNSSIDYADDETLKQSIANKRKIRI</sequence>
<reference key="1">
    <citation type="submission" date="2008-10" db="EMBL/GenBank/DDBJ databases">
        <title>Genome sequence of Ureaplasma urealyticum serovar 10 ATCC-33699.</title>
        <authorList>
            <person name="Shrivastava S."/>
            <person name="Methe B.A."/>
            <person name="Glass J."/>
            <person name="White K."/>
            <person name="Duffy L.B."/>
        </authorList>
    </citation>
    <scope>NUCLEOTIDE SEQUENCE [LARGE SCALE GENOMIC DNA]</scope>
    <source>
        <strain>ATCC 33699 / Western</strain>
    </source>
</reference>
<name>RECR_UREU1</name>
<accession>B5ZAS4</accession>
<evidence type="ECO:0000255" key="1">
    <source>
        <dbReference type="HAMAP-Rule" id="MF_00017"/>
    </source>
</evidence>
<feature type="chain" id="PRO_1000089779" description="Recombination protein RecR">
    <location>
        <begin position="1"/>
        <end position="201"/>
    </location>
</feature>
<feature type="domain" description="Toprim" evidence="1">
    <location>
        <begin position="80"/>
        <end position="176"/>
    </location>
</feature>
<feature type="zinc finger region" description="C4-type" evidence="1">
    <location>
        <begin position="57"/>
        <end position="72"/>
    </location>
</feature>
<gene>
    <name evidence="1" type="primary">recR</name>
    <name type="ordered locus">UUR10_0101</name>
</gene>
<keyword id="KW-0227">DNA damage</keyword>
<keyword id="KW-0233">DNA recombination</keyword>
<keyword id="KW-0234">DNA repair</keyword>
<keyword id="KW-0479">Metal-binding</keyword>
<keyword id="KW-0862">Zinc</keyword>
<keyword id="KW-0863">Zinc-finger</keyword>